<evidence type="ECO:0000255" key="1"/>
<evidence type="ECO:0000305" key="2"/>
<gene>
    <name type="primary">cwlA</name>
</gene>
<feature type="signal peptide">
    <location>
        <begin position="1"/>
        <end position="37"/>
    </location>
</feature>
<feature type="chain" id="PRO_0000006452" description="N-acetylmuramoyl-L-alanine amidase CwlA">
    <location>
        <begin position="38"/>
        <end position="251"/>
    </location>
</feature>
<feature type="domain" description="N-acetylmuramoyl-L-alanine amidase" evidence="1">
    <location>
        <begin position="38"/>
        <end position="140"/>
    </location>
</feature>
<proteinExistence type="inferred from homology"/>
<protein>
    <recommendedName>
        <fullName>N-acetylmuramoyl-L-alanine amidase CwlA</fullName>
        <ecNumber>3.5.1.28</ecNumber>
    </recommendedName>
    <alternativeName>
        <fullName>Autolysin</fullName>
    </alternativeName>
    <alternativeName>
        <fullName>Cell wall hydrolase</fullName>
    </alternativeName>
</protein>
<dbReference type="EC" id="3.5.1.28"/>
<dbReference type="EMBL" id="X13524">
    <property type="protein sequence ID" value="CAA31877.1"/>
    <property type="molecule type" value="Genomic_DNA"/>
</dbReference>
<dbReference type="PIR" id="S08306">
    <property type="entry name" value="S08306"/>
</dbReference>
<dbReference type="SMR" id="P14892"/>
<dbReference type="GO" id="GO:0005576">
    <property type="term" value="C:extracellular region"/>
    <property type="evidence" value="ECO:0007669"/>
    <property type="project" value="UniProtKB-SubCell"/>
</dbReference>
<dbReference type="GO" id="GO:0008745">
    <property type="term" value="F:N-acetylmuramoyl-L-alanine amidase activity"/>
    <property type="evidence" value="ECO:0007669"/>
    <property type="project" value="UniProtKB-EC"/>
</dbReference>
<dbReference type="GO" id="GO:0071555">
    <property type="term" value="P:cell wall organization"/>
    <property type="evidence" value="ECO:0007669"/>
    <property type="project" value="UniProtKB-KW"/>
</dbReference>
<dbReference type="GO" id="GO:0042742">
    <property type="term" value="P:defense response to bacterium"/>
    <property type="evidence" value="ECO:0007669"/>
    <property type="project" value="UniProtKB-KW"/>
</dbReference>
<dbReference type="GO" id="GO:0030420">
    <property type="term" value="P:establishment of competence for transformation"/>
    <property type="evidence" value="ECO:0007669"/>
    <property type="project" value="UniProtKB-KW"/>
</dbReference>
<dbReference type="GO" id="GO:0031640">
    <property type="term" value="P:killing of cells of another organism"/>
    <property type="evidence" value="ECO:0007669"/>
    <property type="project" value="UniProtKB-KW"/>
</dbReference>
<dbReference type="GO" id="GO:0009253">
    <property type="term" value="P:peptidoglycan catabolic process"/>
    <property type="evidence" value="ECO:0007669"/>
    <property type="project" value="InterPro"/>
</dbReference>
<dbReference type="GO" id="GO:0009254">
    <property type="term" value="P:peptidoglycan turnover"/>
    <property type="evidence" value="ECO:0007669"/>
    <property type="project" value="TreeGrafter"/>
</dbReference>
<dbReference type="GO" id="GO:0030435">
    <property type="term" value="P:sporulation resulting in formation of a cellular spore"/>
    <property type="evidence" value="ECO:0007669"/>
    <property type="project" value="UniProtKB-KW"/>
</dbReference>
<dbReference type="CDD" id="cd06583">
    <property type="entry name" value="PGRP"/>
    <property type="match status" value="1"/>
</dbReference>
<dbReference type="FunFam" id="3.40.80.10:FF:000007">
    <property type="entry name" value="N-acetylmuramoyl-L-alanine amidase XlyA"/>
    <property type="match status" value="1"/>
</dbReference>
<dbReference type="Gene3D" id="3.40.80.10">
    <property type="entry name" value="Peptidoglycan recognition protein-like"/>
    <property type="match status" value="1"/>
</dbReference>
<dbReference type="InterPro" id="IPR036505">
    <property type="entry name" value="Amidase/PGRP_sf"/>
</dbReference>
<dbReference type="InterPro" id="IPR021976">
    <property type="entry name" value="Amidase_C"/>
</dbReference>
<dbReference type="InterPro" id="IPR002502">
    <property type="entry name" value="Amidase_domain"/>
</dbReference>
<dbReference type="InterPro" id="IPR051206">
    <property type="entry name" value="NAMLAA_amidase_2"/>
</dbReference>
<dbReference type="PANTHER" id="PTHR30417">
    <property type="entry name" value="N-ACETYLMURAMOYL-L-ALANINE AMIDASE AMID"/>
    <property type="match status" value="1"/>
</dbReference>
<dbReference type="PANTHER" id="PTHR30417:SF11">
    <property type="entry name" value="N-ACETYLMURAMOYL-L-ALANINE AMIDASE XLYA"/>
    <property type="match status" value="1"/>
</dbReference>
<dbReference type="Pfam" id="PF01510">
    <property type="entry name" value="Amidase_2"/>
    <property type="match status" value="1"/>
</dbReference>
<dbReference type="Pfam" id="PF12123">
    <property type="entry name" value="CBD_PlyG"/>
    <property type="match status" value="1"/>
</dbReference>
<dbReference type="SMART" id="SM00644">
    <property type="entry name" value="Ami_2"/>
    <property type="match status" value="1"/>
</dbReference>
<dbReference type="SUPFAM" id="SSF55846">
    <property type="entry name" value="N-acetylmuramoyl-L-alanine amidase-like"/>
    <property type="match status" value="1"/>
</dbReference>
<organism>
    <name type="scientific">Bacillus sp</name>
    <dbReference type="NCBI Taxonomy" id="1409"/>
    <lineage>
        <taxon>Bacteria</taxon>
        <taxon>Bacillati</taxon>
        <taxon>Bacillota</taxon>
        <taxon>Bacilli</taxon>
        <taxon>Bacillales</taxon>
        <taxon>Bacillaceae</taxon>
        <taxon>Bacillus</taxon>
    </lineage>
</organism>
<comment type="function">
    <text>Autolysins are involved in some important biological processes such as cell separation, cell-wall turnover, competence for genetic transformation, formation of the flagella and sporulation.</text>
</comment>
<comment type="catalytic activity">
    <reaction>
        <text>Hydrolyzes the link between N-acetylmuramoyl residues and L-amino acid residues in certain cell-wall glycopeptides.</text>
        <dbReference type="EC" id="3.5.1.28"/>
    </reaction>
</comment>
<comment type="subcellular location">
    <subcellularLocation>
        <location evidence="2">Secreted</location>
    </subcellularLocation>
</comment>
<comment type="miscellaneous">
    <text>Retention of enzymatic activity was limited to the N-terminal fragment (AA 1-196).</text>
</comment>
<comment type="similarity">
    <text evidence="2">Belongs to the N-acetylmuramoyl-L-alanine amidase 2 family.</text>
</comment>
<reference key="1">
    <citation type="journal article" date="1988" name="Mol. Gen. Genet.">
        <title>Cloning, sequencing and expression of a Bacillus bacteriolytic enzyme in Escherichia coli.</title>
        <authorList>
            <person name="Potvin C."/>
            <person name="Leclerc D."/>
            <person name="Tremblay G."/>
            <person name="Asselin A."/>
            <person name="Bellemare G."/>
        </authorList>
    </citation>
    <scope>NUCLEOTIDE SEQUENCE [GENOMIC DNA]</scope>
</reference>
<keyword id="KW-0929">Antimicrobial</keyword>
<keyword id="KW-0081">Bacteriolytic enzyme</keyword>
<keyword id="KW-0961">Cell wall biogenesis/degradation</keyword>
<keyword id="KW-0178">Competence</keyword>
<keyword id="KW-0378">Hydrolase</keyword>
<keyword id="KW-0964">Secreted</keyword>
<keyword id="KW-0732">Signal</keyword>
<keyword id="KW-0749">Sporulation</keyword>
<sequence length="251" mass="28473">MEIKQMLVPVSRYSVLCPYEMNPTEITFHNTYNDAPAINERNNVANNSTGTSFHIAVDDKEAIQLIPFNRNAWHAGDGTNGRGNRHSIGVEICYSQSGGARYRKAELNAVEVIAQLMIQFDIPISKVKTHQERNGKYCPHRMLDEGRVQWFKNQCANRASSIKNSNKTQETGKVEIIVNKFNKVVTYEFGTALVPEMLGMMDALGYESRIISYGDKQGLVRFETAYRQGNELDKATAWLDAKGLKYFYTKE</sequence>
<name>CWLA_BACSP</name>
<accession>P14892</accession>